<accession>Q07XT3</accession>
<feature type="chain" id="PRO_1000164614" description="Alanine racemase">
    <location>
        <begin position="1"/>
        <end position="372"/>
    </location>
</feature>
<feature type="active site" description="Proton acceptor; specific for D-alanine" evidence="1">
    <location>
        <position position="35"/>
    </location>
</feature>
<feature type="active site" description="Proton acceptor; specific for L-alanine" evidence="1">
    <location>
        <position position="268"/>
    </location>
</feature>
<feature type="binding site" evidence="1">
    <location>
        <position position="143"/>
    </location>
    <ligand>
        <name>substrate</name>
    </ligand>
</feature>
<feature type="binding site" evidence="1">
    <location>
        <position position="316"/>
    </location>
    <ligand>
        <name>substrate</name>
    </ligand>
</feature>
<feature type="modified residue" description="N6-(pyridoxal phosphate)lysine" evidence="1">
    <location>
        <position position="35"/>
    </location>
</feature>
<keyword id="KW-0413">Isomerase</keyword>
<keyword id="KW-0663">Pyridoxal phosphate</keyword>
<keyword id="KW-1185">Reference proteome</keyword>
<gene>
    <name type="primary">alr</name>
    <name type="ordered locus">Sfri_3345</name>
</gene>
<proteinExistence type="inferred from homology"/>
<organism>
    <name type="scientific">Shewanella frigidimarina (strain NCIMB 400)</name>
    <dbReference type="NCBI Taxonomy" id="318167"/>
    <lineage>
        <taxon>Bacteria</taxon>
        <taxon>Pseudomonadati</taxon>
        <taxon>Pseudomonadota</taxon>
        <taxon>Gammaproteobacteria</taxon>
        <taxon>Alteromonadales</taxon>
        <taxon>Shewanellaceae</taxon>
        <taxon>Shewanella</taxon>
    </lineage>
</organism>
<name>ALR_SHEFN</name>
<sequence>MKPFPRAEISRYALQSNLAQLRLIAPNSKIMAVVKANGYGHGLLNVAECVGLLNYVESVCKYHGGADGFGLARLEEALQLREGGVKGKLLLLEGFFRQSDLPTLVSHNIDTVVHHESQLQMLETIALDKPVTVWIKIDTGMHRIGFSLEQFNSIYQRLLACPQVAKPIHLMTHFACADEPDNPLTQTQMNAFEQQVSGLEGDRTLANSAGTLFWPTSQADWVRPGIALYGVSPVVGDRGVNHRLIPAMELVSNLIAVREHKAGDSVGYGASWTAKKDTRLGVVAIGYGDGYPRNAPEGTPVWINGRRVPIVGRVSMDMLTVDLGADAQDNVGDSVQLWGKALAVEEVAEHIGTIAYELVTKLTPRVVVELLD</sequence>
<protein>
    <recommendedName>
        <fullName evidence="1">Alanine racemase</fullName>
        <ecNumber evidence="1">5.1.1.1</ecNumber>
    </recommendedName>
</protein>
<reference key="1">
    <citation type="submission" date="2006-08" db="EMBL/GenBank/DDBJ databases">
        <title>Complete sequence of Shewanella frigidimarina NCIMB 400.</title>
        <authorList>
            <consortium name="US DOE Joint Genome Institute"/>
            <person name="Copeland A."/>
            <person name="Lucas S."/>
            <person name="Lapidus A."/>
            <person name="Barry K."/>
            <person name="Detter J.C."/>
            <person name="Glavina del Rio T."/>
            <person name="Hammon N."/>
            <person name="Israni S."/>
            <person name="Dalin E."/>
            <person name="Tice H."/>
            <person name="Pitluck S."/>
            <person name="Fredrickson J.K."/>
            <person name="Kolker E."/>
            <person name="McCuel L.A."/>
            <person name="DiChristina T."/>
            <person name="Nealson K.H."/>
            <person name="Newman D."/>
            <person name="Tiedje J.M."/>
            <person name="Zhou J."/>
            <person name="Romine M.F."/>
            <person name="Culley D.E."/>
            <person name="Serres M."/>
            <person name="Chertkov O."/>
            <person name="Brettin T."/>
            <person name="Bruce D."/>
            <person name="Han C."/>
            <person name="Tapia R."/>
            <person name="Gilna P."/>
            <person name="Schmutz J."/>
            <person name="Larimer F."/>
            <person name="Land M."/>
            <person name="Hauser L."/>
            <person name="Kyrpides N."/>
            <person name="Mikhailova N."/>
            <person name="Richardson P."/>
        </authorList>
    </citation>
    <scope>NUCLEOTIDE SEQUENCE [LARGE SCALE GENOMIC DNA]</scope>
    <source>
        <strain>NCIMB 400</strain>
    </source>
</reference>
<comment type="function">
    <text evidence="1">Catalyzes the interconversion of L-alanine and D-alanine. May also act on other amino acids.</text>
</comment>
<comment type="catalytic activity">
    <reaction evidence="1">
        <text>L-alanine = D-alanine</text>
        <dbReference type="Rhea" id="RHEA:20249"/>
        <dbReference type="ChEBI" id="CHEBI:57416"/>
        <dbReference type="ChEBI" id="CHEBI:57972"/>
        <dbReference type="EC" id="5.1.1.1"/>
    </reaction>
</comment>
<comment type="cofactor">
    <cofactor evidence="1">
        <name>pyridoxal 5'-phosphate</name>
        <dbReference type="ChEBI" id="CHEBI:597326"/>
    </cofactor>
</comment>
<comment type="pathway">
    <text evidence="1">Amino-acid biosynthesis; D-alanine biosynthesis; D-alanine from L-alanine: step 1/1.</text>
</comment>
<comment type="similarity">
    <text evidence="1">Belongs to the alanine racemase family.</text>
</comment>
<evidence type="ECO:0000255" key="1">
    <source>
        <dbReference type="HAMAP-Rule" id="MF_01201"/>
    </source>
</evidence>
<dbReference type="EC" id="5.1.1.1" evidence="1"/>
<dbReference type="EMBL" id="CP000447">
    <property type="protein sequence ID" value="ABI73181.1"/>
    <property type="molecule type" value="Genomic_DNA"/>
</dbReference>
<dbReference type="RefSeq" id="WP_011638783.1">
    <property type="nucleotide sequence ID" value="NC_008345.1"/>
</dbReference>
<dbReference type="SMR" id="Q07XT3"/>
<dbReference type="STRING" id="318167.Sfri_3345"/>
<dbReference type="KEGG" id="sfr:Sfri_3345"/>
<dbReference type="eggNOG" id="COG0787">
    <property type="taxonomic scope" value="Bacteria"/>
</dbReference>
<dbReference type="HOGENOM" id="CLU_028393_1_0_6"/>
<dbReference type="OrthoDB" id="9813814at2"/>
<dbReference type="UniPathway" id="UPA00042">
    <property type="reaction ID" value="UER00497"/>
</dbReference>
<dbReference type="Proteomes" id="UP000000684">
    <property type="component" value="Chromosome"/>
</dbReference>
<dbReference type="GO" id="GO:0005829">
    <property type="term" value="C:cytosol"/>
    <property type="evidence" value="ECO:0007669"/>
    <property type="project" value="TreeGrafter"/>
</dbReference>
<dbReference type="GO" id="GO:0008784">
    <property type="term" value="F:alanine racemase activity"/>
    <property type="evidence" value="ECO:0007669"/>
    <property type="project" value="UniProtKB-UniRule"/>
</dbReference>
<dbReference type="GO" id="GO:0030170">
    <property type="term" value="F:pyridoxal phosphate binding"/>
    <property type="evidence" value="ECO:0007669"/>
    <property type="project" value="UniProtKB-UniRule"/>
</dbReference>
<dbReference type="GO" id="GO:0030632">
    <property type="term" value="P:D-alanine biosynthetic process"/>
    <property type="evidence" value="ECO:0007669"/>
    <property type="project" value="UniProtKB-UniRule"/>
</dbReference>
<dbReference type="CDD" id="cd06827">
    <property type="entry name" value="PLPDE_III_AR_proteobact"/>
    <property type="match status" value="1"/>
</dbReference>
<dbReference type="FunFam" id="2.40.37.10:FF:000002">
    <property type="entry name" value="Alanine racemase"/>
    <property type="match status" value="1"/>
</dbReference>
<dbReference type="FunFam" id="3.20.20.10:FF:000002">
    <property type="entry name" value="Alanine racemase"/>
    <property type="match status" value="1"/>
</dbReference>
<dbReference type="Gene3D" id="3.20.20.10">
    <property type="entry name" value="Alanine racemase"/>
    <property type="match status" value="1"/>
</dbReference>
<dbReference type="Gene3D" id="2.40.37.10">
    <property type="entry name" value="Lyase, Ornithine Decarboxylase, Chain A, domain 1"/>
    <property type="match status" value="1"/>
</dbReference>
<dbReference type="HAMAP" id="MF_01201">
    <property type="entry name" value="Ala_racemase"/>
    <property type="match status" value="1"/>
</dbReference>
<dbReference type="InterPro" id="IPR000821">
    <property type="entry name" value="Ala_racemase"/>
</dbReference>
<dbReference type="InterPro" id="IPR009006">
    <property type="entry name" value="Ala_racemase/Decarboxylase_C"/>
</dbReference>
<dbReference type="InterPro" id="IPR011079">
    <property type="entry name" value="Ala_racemase_C"/>
</dbReference>
<dbReference type="InterPro" id="IPR001608">
    <property type="entry name" value="Ala_racemase_N"/>
</dbReference>
<dbReference type="InterPro" id="IPR020622">
    <property type="entry name" value="Ala_racemase_pyridoxalP-BS"/>
</dbReference>
<dbReference type="InterPro" id="IPR029066">
    <property type="entry name" value="PLP-binding_barrel"/>
</dbReference>
<dbReference type="NCBIfam" id="TIGR00492">
    <property type="entry name" value="alr"/>
    <property type="match status" value="1"/>
</dbReference>
<dbReference type="PANTHER" id="PTHR30511">
    <property type="entry name" value="ALANINE RACEMASE"/>
    <property type="match status" value="1"/>
</dbReference>
<dbReference type="PANTHER" id="PTHR30511:SF4">
    <property type="entry name" value="ALANINE RACEMASE, BIOSYNTHETIC"/>
    <property type="match status" value="1"/>
</dbReference>
<dbReference type="Pfam" id="PF00842">
    <property type="entry name" value="Ala_racemase_C"/>
    <property type="match status" value="1"/>
</dbReference>
<dbReference type="Pfam" id="PF01168">
    <property type="entry name" value="Ala_racemase_N"/>
    <property type="match status" value="1"/>
</dbReference>
<dbReference type="PRINTS" id="PR00992">
    <property type="entry name" value="ALARACEMASE"/>
</dbReference>
<dbReference type="SMART" id="SM01005">
    <property type="entry name" value="Ala_racemase_C"/>
    <property type="match status" value="1"/>
</dbReference>
<dbReference type="SUPFAM" id="SSF50621">
    <property type="entry name" value="Alanine racemase C-terminal domain-like"/>
    <property type="match status" value="1"/>
</dbReference>
<dbReference type="SUPFAM" id="SSF51419">
    <property type="entry name" value="PLP-binding barrel"/>
    <property type="match status" value="1"/>
</dbReference>
<dbReference type="PROSITE" id="PS00395">
    <property type="entry name" value="ALANINE_RACEMASE"/>
    <property type="match status" value="1"/>
</dbReference>